<name>URE3_PHOLL</name>
<sequence length="100" mass="11083">MQLTPREIEKLMVYTLADVALKRKSRGLKLNYPEAVAIITAAALEGAREGKTLEEVMDDSRHVLTKEDVMDGVADLIPHVQVEAIFTDGSRLVTVHDPIQ</sequence>
<proteinExistence type="inferred from homology"/>
<comment type="catalytic activity">
    <reaction evidence="1">
        <text>urea + 2 H2O + H(+) = hydrogencarbonate + 2 NH4(+)</text>
        <dbReference type="Rhea" id="RHEA:20557"/>
        <dbReference type="ChEBI" id="CHEBI:15377"/>
        <dbReference type="ChEBI" id="CHEBI:15378"/>
        <dbReference type="ChEBI" id="CHEBI:16199"/>
        <dbReference type="ChEBI" id="CHEBI:17544"/>
        <dbReference type="ChEBI" id="CHEBI:28938"/>
        <dbReference type="EC" id="3.5.1.5"/>
    </reaction>
</comment>
<comment type="pathway">
    <text evidence="1">Nitrogen metabolism; urea degradation; CO(2) and NH(3) from urea (urease route): step 1/1.</text>
</comment>
<comment type="subunit">
    <text evidence="1">Heterotrimer of UreA (gamma), UreB (beta) and UreC (alpha) subunits. Three heterotrimers associate to form the active enzyme.</text>
</comment>
<comment type="subcellular location">
    <subcellularLocation>
        <location evidence="1">Cytoplasm</location>
    </subcellularLocation>
</comment>
<comment type="similarity">
    <text evidence="1">Belongs to the urease gamma subunit family.</text>
</comment>
<organism>
    <name type="scientific">Photorhabdus laumondii subsp. laumondii (strain DSM 15139 / CIP 105565 / TT01)</name>
    <name type="common">Photorhabdus luminescens subsp. laumondii</name>
    <dbReference type="NCBI Taxonomy" id="243265"/>
    <lineage>
        <taxon>Bacteria</taxon>
        <taxon>Pseudomonadati</taxon>
        <taxon>Pseudomonadota</taxon>
        <taxon>Gammaproteobacteria</taxon>
        <taxon>Enterobacterales</taxon>
        <taxon>Morganellaceae</taxon>
        <taxon>Photorhabdus</taxon>
    </lineage>
</organism>
<accession>Q7N4Y9</accession>
<gene>
    <name evidence="1" type="primary">ureA</name>
    <name type="ordered locus">plu2171</name>
</gene>
<keyword id="KW-0963">Cytoplasm</keyword>
<keyword id="KW-0378">Hydrolase</keyword>
<keyword id="KW-1185">Reference proteome</keyword>
<reference key="1">
    <citation type="journal article" date="2003" name="Nat. Biotechnol.">
        <title>The genome sequence of the entomopathogenic bacterium Photorhabdus luminescens.</title>
        <authorList>
            <person name="Duchaud E."/>
            <person name="Rusniok C."/>
            <person name="Frangeul L."/>
            <person name="Buchrieser C."/>
            <person name="Givaudan A."/>
            <person name="Taourit S."/>
            <person name="Bocs S."/>
            <person name="Boursaux-Eude C."/>
            <person name="Chandler M."/>
            <person name="Charles J.-F."/>
            <person name="Dassa E."/>
            <person name="Derose R."/>
            <person name="Derzelle S."/>
            <person name="Freyssinet G."/>
            <person name="Gaudriault S."/>
            <person name="Medigue C."/>
            <person name="Lanois A."/>
            <person name="Powell K."/>
            <person name="Siguier P."/>
            <person name="Vincent R."/>
            <person name="Wingate V."/>
            <person name="Zouine M."/>
            <person name="Glaser P."/>
            <person name="Boemare N."/>
            <person name="Danchin A."/>
            <person name="Kunst F."/>
        </authorList>
    </citation>
    <scope>NUCLEOTIDE SEQUENCE [LARGE SCALE GENOMIC DNA]</scope>
    <source>
        <strain>DSM 15139 / CIP 105565 / TT01</strain>
    </source>
</reference>
<evidence type="ECO:0000255" key="1">
    <source>
        <dbReference type="HAMAP-Rule" id="MF_00739"/>
    </source>
</evidence>
<protein>
    <recommendedName>
        <fullName evidence="1">Urease subunit gamma</fullName>
        <ecNumber evidence="1">3.5.1.5</ecNumber>
    </recommendedName>
    <alternativeName>
        <fullName evidence="1">Urea amidohydrolase subunit gamma</fullName>
    </alternativeName>
</protein>
<feature type="chain" id="PRO_0000098022" description="Urease subunit gamma">
    <location>
        <begin position="1"/>
        <end position="100"/>
    </location>
</feature>
<dbReference type="EC" id="3.5.1.5" evidence="1"/>
<dbReference type="EMBL" id="BX571866">
    <property type="protein sequence ID" value="CAE14464.1"/>
    <property type="molecule type" value="Genomic_DNA"/>
</dbReference>
<dbReference type="RefSeq" id="WP_011146425.1">
    <property type="nucleotide sequence ID" value="NC_005126.1"/>
</dbReference>
<dbReference type="SMR" id="Q7N4Y9"/>
<dbReference type="STRING" id="243265.plu2171"/>
<dbReference type="GeneID" id="88807046"/>
<dbReference type="KEGG" id="plu:plu2171"/>
<dbReference type="eggNOG" id="COG0831">
    <property type="taxonomic scope" value="Bacteria"/>
</dbReference>
<dbReference type="HOGENOM" id="CLU_145825_1_0_6"/>
<dbReference type="OrthoDB" id="9797217at2"/>
<dbReference type="UniPathway" id="UPA00258">
    <property type="reaction ID" value="UER00370"/>
</dbReference>
<dbReference type="Proteomes" id="UP000002514">
    <property type="component" value="Chromosome"/>
</dbReference>
<dbReference type="GO" id="GO:0005737">
    <property type="term" value="C:cytoplasm"/>
    <property type="evidence" value="ECO:0007669"/>
    <property type="project" value="UniProtKB-SubCell"/>
</dbReference>
<dbReference type="GO" id="GO:0016151">
    <property type="term" value="F:nickel cation binding"/>
    <property type="evidence" value="ECO:0007669"/>
    <property type="project" value="InterPro"/>
</dbReference>
<dbReference type="GO" id="GO:0009039">
    <property type="term" value="F:urease activity"/>
    <property type="evidence" value="ECO:0007669"/>
    <property type="project" value="UniProtKB-UniRule"/>
</dbReference>
<dbReference type="GO" id="GO:0043419">
    <property type="term" value="P:urea catabolic process"/>
    <property type="evidence" value="ECO:0007669"/>
    <property type="project" value="UniProtKB-UniRule"/>
</dbReference>
<dbReference type="CDD" id="cd00390">
    <property type="entry name" value="Urease_gamma"/>
    <property type="match status" value="1"/>
</dbReference>
<dbReference type="Gene3D" id="3.30.280.10">
    <property type="entry name" value="Urease, gamma-like subunit"/>
    <property type="match status" value="1"/>
</dbReference>
<dbReference type="HAMAP" id="MF_00739">
    <property type="entry name" value="Urease_gamma"/>
    <property type="match status" value="1"/>
</dbReference>
<dbReference type="InterPro" id="IPR012010">
    <property type="entry name" value="Urease_gamma"/>
</dbReference>
<dbReference type="InterPro" id="IPR002026">
    <property type="entry name" value="Urease_gamma/gamma-beta_su"/>
</dbReference>
<dbReference type="InterPro" id="IPR036463">
    <property type="entry name" value="Urease_gamma_sf"/>
</dbReference>
<dbReference type="InterPro" id="IPR050069">
    <property type="entry name" value="Urease_subunit"/>
</dbReference>
<dbReference type="NCBIfam" id="NF009712">
    <property type="entry name" value="PRK13241.1"/>
    <property type="match status" value="1"/>
</dbReference>
<dbReference type="NCBIfam" id="TIGR00193">
    <property type="entry name" value="urease_gam"/>
    <property type="match status" value="1"/>
</dbReference>
<dbReference type="PANTHER" id="PTHR33569">
    <property type="entry name" value="UREASE"/>
    <property type="match status" value="1"/>
</dbReference>
<dbReference type="PANTHER" id="PTHR33569:SF1">
    <property type="entry name" value="UREASE"/>
    <property type="match status" value="1"/>
</dbReference>
<dbReference type="Pfam" id="PF00547">
    <property type="entry name" value="Urease_gamma"/>
    <property type="match status" value="1"/>
</dbReference>
<dbReference type="PIRSF" id="PIRSF001223">
    <property type="entry name" value="Urease_gamma"/>
    <property type="match status" value="1"/>
</dbReference>
<dbReference type="SUPFAM" id="SSF54111">
    <property type="entry name" value="Urease, gamma-subunit"/>
    <property type="match status" value="1"/>
</dbReference>